<comment type="function">
    <text evidence="1">Catalyzes the folate-dependent formation of 5-methyl-uridine at position 54 (M-5-U54) in all tRNAs.</text>
</comment>
<comment type="catalytic activity">
    <reaction evidence="1">
        <text>uridine(54) in tRNA + (6R)-5,10-methylene-5,6,7,8-tetrahydrofolate + NADH + H(+) = 5-methyluridine(54) in tRNA + (6S)-5,6,7,8-tetrahydrofolate + NAD(+)</text>
        <dbReference type="Rhea" id="RHEA:16873"/>
        <dbReference type="Rhea" id="RHEA-COMP:10167"/>
        <dbReference type="Rhea" id="RHEA-COMP:10193"/>
        <dbReference type="ChEBI" id="CHEBI:15378"/>
        <dbReference type="ChEBI" id="CHEBI:15636"/>
        <dbReference type="ChEBI" id="CHEBI:57453"/>
        <dbReference type="ChEBI" id="CHEBI:57540"/>
        <dbReference type="ChEBI" id="CHEBI:57945"/>
        <dbReference type="ChEBI" id="CHEBI:65315"/>
        <dbReference type="ChEBI" id="CHEBI:74447"/>
        <dbReference type="EC" id="2.1.1.74"/>
    </reaction>
</comment>
<comment type="catalytic activity">
    <reaction evidence="1">
        <text>uridine(54) in tRNA + (6R)-5,10-methylene-5,6,7,8-tetrahydrofolate + NADPH + H(+) = 5-methyluridine(54) in tRNA + (6S)-5,6,7,8-tetrahydrofolate + NADP(+)</text>
        <dbReference type="Rhea" id="RHEA:62372"/>
        <dbReference type="Rhea" id="RHEA-COMP:10167"/>
        <dbReference type="Rhea" id="RHEA-COMP:10193"/>
        <dbReference type="ChEBI" id="CHEBI:15378"/>
        <dbReference type="ChEBI" id="CHEBI:15636"/>
        <dbReference type="ChEBI" id="CHEBI:57453"/>
        <dbReference type="ChEBI" id="CHEBI:57783"/>
        <dbReference type="ChEBI" id="CHEBI:58349"/>
        <dbReference type="ChEBI" id="CHEBI:65315"/>
        <dbReference type="ChEBI" id="CHEBI:74447"/>
        <dbReference type="EC" id="2.1.1.74"/>
    </reaction>
</comment>
<comment type="cofactor">
    <cofactor evidence="1">
        <name>FAD</name>
        <dbReference type="ChEBI" id="CHEBI:57692"/>
    </cofactor>
</comment>
<comment type="subcellular location">
    <subcellularLocation>
        <location evidence="1">Cytoplasm</location>
    </subcellularLocation>
</comment>
<comment type="similarity">
    <text evidence="1">Belongs to the MnmG family. TrmFO subfamily.</text>
</comment>
<sequence length="444" mass="49500">MSQTHINVIGAGLAGSEAAYQIAKRGIPVKLYEMRGVKPTPQHKTDKFAELVCSNSFRGDSLTNAVGLLKEEMRRLDSIIMRAGEAHRVPAGGAMAMDRENFSQAVTDEIHNHPLIEVIRGEITEIPEDAITVIATGPLTSDALAEKIHALNGGDGFYFYDAAAPIVDSSTINMDLVYLKSRYDKGEAAYLNAPMNKEQFNAFYEALISAEEAPLNSFEKEKYFEGCMPIEVMAKRGIKTMLYGPMKPVGLEYPEDYKGPRDGEYKTPYAVVQLRQDNAAGSLYNIVGFQTHLKWGEQKRIFQMIPGLENAEFVRYGVMHRNSYMDSPNLLEQTFATKKNPNLFFAGQMTGVEGYVESAASGLVAGINAVRRFHGEEPVIFPQTTAIGALPFYITHTESKHFQPMNVNFGIIKELDGPRIRDKKERYEAIAERSLKDLEEFLTV</sequence>
<gene>
    <name evidence="1" type="primary">trmFO</name>
    <name type="synonym">gid</name>
    <name type="ordered locus">SSU05_0901</name>
</gene>
<name>TRMFO_STRSY</name>
<feature type="chain" id="PRO_1000063939" description="Methylenetetrahydrofolate--tRNA-(uracil-5-)-methyltransferase TrmFO">
    <location>
        <begin position="1"/>
        <end position="444"/>
    </location>
</feature>
<feature type="binding site" evidence="1">
    <location>
        <begin position="10"/>
        <end position="15"/>
    </location>
    <ligand>
        <name>FAD</name>
        <dbReference type="ChEBI" id="CHEBI:57692"/>
    </ligand>
</feature>
<proteinExistence type="inferred from homology"/>
<keyword id="KW-0963">Cytoplasm</keyword>
<keyword id="KW-0274">FAD</keyword>
<keyword id="KW-0285">Flavoprotein</keyword>
<keyword id="KW-0489">Methyltransferase</keyword>
<keyword id="KW-0520">NAD</keyword>
<keyword id="KW-0521">NADP</keyword>
<keyword id="KW-0808">Transferase</keyword>
<keyword id="KW-0819">tRNA processing</keyword>
<dbReference type="EC" id="2.1.1.74" evidence="1"/>
<dbReference type="EMBL" id="CP000407">
    <property type="protein sequence ID" value="ABP89867.1"/>
    <property type="molecule type" value="Genomic_DNA"/>
</dbReference>
<dbReference type="SMR" id="A4VUS8"/>
<dbReference type="STRING" id="391295.SSU05_0901"/>
<dbReference type="KEGG" id="ssu:SSU05_0901"/>
<dbReference type="eggNOG" id="COG1206">
    <property type="taxonomic scope" value="Bacteria"/>
</dbReference>
<dbReference type="HOGENOM" id="CLU_033057_1_0_9"/>
<dbReference type="GO" id="GO:0005829">
    <property type="term" value="C:cytosol"/>
    <property type="evidence" value="ECO:0007669"/>
    <property type="project" value="TreeGrafter"/>
</dbReference>
<dbReference type="GO" id="GO:0050660">
    <property type="term" value="F:flavin adenine dinucleotide binding"/>
    <property type="evidence" value="ECO:0007669"/>
    <property type="project" value="UniProtKB-UniRule"/>
</dbReference>
<dbReference type="GO" id="GO:0047151">
    <property type="term" value="F:tRNA (uracil(54)-C5)-methyltransferase activity, 5,10-methylenetetrahydrofolate-dependent"/>
    <property type="evidence" value="ECO:0007669"/>
    <property type="project" value="UniProtKB-UniRule"/>
</dbReference>
<dbReference type="GO" id="GO:0030488">
    <property type="term" value="P:tRNA methylation"/>
    <property type="evidence" value="ECO:0007669"/>
    <property type="project" value="TreeGrafter"/>
</dbReference>
<dbReference type="GO" id="GO:0002098">
    <property type="term" value="P:tRNA wobble uridine modification"/>
    <property type="evidence" value="ECO:0007669"/>
    <property type="project" value="TreeGrafter"/>
</dbReference>
<dbReference type="FunFam" id="3.50.50.60:FF:000035">
    <property type="entry name" value="Methylenetetrahydrofolate--tRNA-(uracil-5-)-methyltransferase TrmFO"/>
    <property type="match status" value="1"/>
</dbReference>
<dbReference type="FunFam" id="3.50.50.60:FF:000040">
    <property type="entry name" value="Methylenetetrahydrofolate--tRNA-(uracil-5-)-methyltransferase TrmFO"/>
    <property type="match status" value="1"/>
</dbReference>
<dbReference type="Gene3D" id="3.50.50.60">
    <property type="entry name" value="FAD/NAD(P)-binding domain"/>
    <property type="match status" value="2"/>
</dbReference>
<dbReference type="HAMAP" id="MF_01037">
    <property type="entry name" value="TrmFO"/>
    <property type="match status" value="1"/>
</dbReference>
<dbReference type="InterPro" id="IPR036188">
    <property type="entry name" value="FAD/NAD-bd_sf"/>
</dbReference>
<dbReference type="InterPro" id="IPR002218">
    <property type="entry name" value="MnmG-rel"/>
</dbReference>
<dbReference type="InterPro" id="IPR020595">
    <property type="entry name" value="MnmG-rel_CS"/>
</dbReference>
<dbReference type="InterPro" id="IPR040131">
    <property type="entry name" value="MnmG_N"/>
</dbReference>
<dbReference type="InterPro" id="IPR004417">
    <property type="entry name" value="TrmFO"/>
</dbReference>
<dbReference type="NCBIfam" id="TIGR00137">
    <property type="entry name" value="gid_trmFO"/>
    <property type="match status" value="1"/>
</dbReference>
<dbReference type="NCBIfam" id="NF003739">
    <property type="entry name" value="PRK05335.1"/>
    <property type="match status" value="1"/>
</dbReference>
<dbReference type="PANTHER" id="PTHR11806">
    <property type="entry name" value="GLUCOSE INHIBITED DIVISION PROTEIN A"/>
    <property type="match status" value="1"/>
</dbReference>
<dbReference type="PANTHER" id="PTHR11806:SF2">
    <property type="entry name" value="METHYLENETETRAHYDROFOLATE--TRNA-(URACIL-5-)-METHYLTRANSFERASE TRMFO"/>
    <property type="match status" value="1"/>
</dbReference>
<dbReference type="Pfam" id="PF01134">
    <property type="entry name" value="GIDA"/>
    <property type="match status" value="1"/>
</dbReference>
<dbReference type="SUPFAM" id="SSF51905">
    <property type="entry name" value="FAD/NAD(P)-binding domain"/>
    <property type="match status" value="1"/>
</dbReference>
<dbReference type="PROSITE" id="PS01281">
    <property type="entry name" value="GIDA_2"/>
    <property type="match status" value="1"/>
</dbReference>
<protein>
    <recommendedName>
        <fullName evidence="1">Methylenetetrahydrofolate--tRNA-(uracil-5-)-methyltransferase TrmFO</fullName>
        <ecNumber evidence="1">2.1.1.74</ecNumber>
    </recommendedName>
    <alternativeName>
        <fullName evidence="1">Folate-dependent tRNA (uracil-5-)-methyltransferase</fullName>
    </alternativeName>
    <alternativeName>
        <fullName evidence="1">Folate-dependent tRNA(M-5-U54)-methyltransferase</fullName>
    </alternativeName>
</protein>
<evidence type="ECO:0000255" key="1">
    <source>
        <dbReference type="HAMAP-Rule" id="MF_01037"/>
    </source>
</evidence>
<reference key="1">
    <citation type="journal article" date="2007" name="PLoS ONE">
        <title>A glimpse of streptococcal toxic shock syndrome from comparative genomics of S. suis 2 Chinese isolates.</title>
        <authorList>
            <person name="Chen C."/>
            <person name="Tang J."/>
            <person name="Dong W."/>
            <person name="Wang C."/>
            <person name="Feng Y."/>
            <person name="Wang J."/>
            <person name="Zheng F."/>
            <person name="Pan X."/>
            <person name="Liu D."/>
            <person name="Li M."/>
            <person name="Song Y."/>
            <person name="Zhu X."/>
            <person name="Sun H."/>
            <person name="Feng T."/>
            <person name="Guo Z."/>
            <person name="Ju A."/>
            <person name="Ge J."/>
            <person name="Dong Y."/>
            <person name="Sun W."/>
            <person name="Jiang Y."/>
            <person name="Wang J."/>
            <person name="Yan J."/>
            <person name="Yang H."/>
            <person name="Wang X."/>
            <person name="Gao G.F."/>
            <person name="Yang R."/>
            <person name="Wang J."/>
            <person name="Yu J."/>
        </authorList>
    </citation>
    <scope>NUCLEOTIDE SEQUENCE [LARGE SCALE GENOMIC DNA]</scope>
    <source>
        <strain>05ZYH33</strain>
    </source>
</reference>
<accession>A4VUS8</accession>
<organism>
    <name type="scientific">Streptococcus suis (strain 05ZYH33)</name>
    <dbReference type="NCBI Taxonomy" id="391295"/>
    <lineage>
        <taxon>Bacteria</taxon>
        <taxon>Bacillati</taxon>
        <taxon>Bacillota</taxon>
        <taxon>Bacilli</taxon>
        <taxon>Lactobacillales</taxon>
        <taxon>Streptococcaceae</taxon>
        <taxon>Streptococcus</taxon>
    </lineage>
</organism>